<sequence>MKPHMSATVLRAPRVAAILLAVVLAAVLATAVNGAQRCGDQARGAKCPNCLCCGKYGFCGSGDAYCGAGSCQSQCRGCRDDVVGQALPAEPGSTRATAASSASARGLNLTATTGGP</sequence>
<protein>
    <recommendedName>
        <fullName evidence="8">Antimicrobial peptide 1b</fullName>
        <shortName evidence="8">WAMP-1b</shortName>
    </recommendedName>
    <alternativeName>
        <fullName evidence="7">Antimicrobial peptide H1</fullName>
        <shortName evidence="7">Tk-AMP-H1</shortName>
    </alternativeName>
    <component>
        <recommendedName>
            <fullName evidence="8">Antimicrobial peptide 1a</fullName>
            <shortName evidence="8">WAMP-1a</shortName>
        </recommendedName>
    </component>
</protein>
<organism>
    <name type="scientific">Triticum kiharae</name>
    <name type="common">Wheat</name>
    <dbReference type="NCBI Taxonomy" id="376535"/>
    <lineage>
        <taxon>Eukaryota</taxon>
        <taxon>Viridiplantae</taxon>
        <taxon>Streptophyta</taxon>
        <taxon>Embryophyta</taxon>
        <taxon>Tracheophyta</taxon>
        <taxon>Spermatophyta</taxon>
        <taxon>Magnoliopsida</taxon>
        <taxon>Liliopsida</taxon>
        <taxon>Poales</taxon>
        <taxon>Poaceae</taxon>
        <taxon>BOP clade</taxon>
        <taxon>Pooideae</taxon>
        <taxon>Triticodae</taxon>
        <taxon>Triticeae</taxon>
        <taxon>Triticinae</taxon>
        <taxon>Triticum</taxon>
    </lineage>
</organism>
<evidence type="ECO:0000255" key="1">
    <source>
        <dbReference type="PROSITE-ProRule" id="PRU00261"/>
    </source>
</evidence>
<evidence type="ECO:0000256" key="2">
    <source>
        <dbReference type="SAM" id="MobiDB-lite"/>
    </source>
</evidence>
<evidence type="ECO:0000269" key="3">
    <source>
    </source>
</evidence>
<evidence type="ECO:0000269" key="4">
    <source>
    </source>
</evidence>
<evidence type="ECO:0000269" key="5">
    <source>
    </source>
</evidence>
<evidence type="ECO:0000269" key="6">
    <source>
    </source>
</evidence>
<evidence type="ECO:0000303" key="7">
    <source>
    </source>
</evidence>
<evidence type="ECO:0000303" key="8">
    <source>
    </source>
</evidence>
<evidence type="ECO:0000303" key="9">
    <source>
    </source>
</evidence>
<evidence type="ECO:0000305" key="10"/>
<evidence type="ECO:0007744" key="11">
    <source>
        <dbReference type="PDB" id="2LB7"/>
    </source>
</evidence>
<evidence type="ECO:0007829" key="12">
    <source>
        <dbReference type="PDB" id="2LB7"/>
    </source>
</evidence>
<feature type="signal peptide" evidence="4">
    <location>
        <begin position="1"/>
        <end position="34"/>
    </location>
</feature>
<feature type="peptide" id="PRO_0000388709" description="Antimicrobial peptide 1b" evidence="4">
    <location>
        <begin position="35"/>
        <end position="79"/>
    </location>
</feature>
<feature type="peptide" id="PRO_0000388710" description="Antimicrobial peptide 1a" evidence="4">
    <location>
        <begin position="35"/>
        <end position="78"/>
    </location>
</feature>
<feature type="propeptide" id="PRO_0000445025" evidence="4">
    <location>
        <begin position="80"/>
        <end position="116"/>
    </location>
</feature>
<feature type="domain" description="Chitin-binding type-1" evidence="1">
    <location>
        <begin position="35"/>
        <end position="77"/>
    </location>
</feature>
<feature type="region of interest" description="Disordered" evidence="2">
    <location>
        <begin position="89"/>
        <end position="116"/>
    </location>
</feature>
<feature type="compositionally biased region" description="Low complexity" evidence="2">
    <location>
        <begin position="93"/>
        <end position="105"/>
    </location>
</feature>
<feature type="disulfide bond" evidence="1 5 11">
    <location>
        <begin position="38"/>
        <end position="53"/>
    </location>
</feature>
<feature type="disulfide bond" evidence="1 5 11">
    <location>
        <begin position="47"/>
        <end position="59"/>
    </location>
</feature>
<feature type="disulfide bond" evidence="5 11">
    <location>
        <begin position="50"/>
        <end position="78"/>
    </location>
</feature>
<feature type="disulfide bond" evidence="1 5 11">
    <location>
        <begin position="52"/>
        <end position="66"/>
    </location>
</feature>
<feature type="disulfide bond" evidence="1 5 11">
    <location>
        <begin position="71"/>
        <end position="75"/>
    </location>
</feature>
<feature type="sequence conflict" description="In Ref. 3; AA sequence." evidence="10" ref="3">
    <original>C</original>
    <variation>N</variation>
    <location>
        <position position="50"/>
    </location>
</feature>
<feature type="helix" evidence="12">
    <location>
        <begin position="39"/>
        <end position="42"/>
    </location>
</feature>
<feature type="strand" evidence="12">
    <location>
        <begin position="52"/>
        <end position="54"/>
    </location>
</feature>
<feature type="turn" evidence="12">
    <location>
        <begin position="55"/>
        <end position="57"/>
    </location>
</feature>
<feature type="strand" evidence="12">
    <location>
        <begin position="58"/>
        <end position="60"/>
    </location>
</feature>
<feature type="helix" evidence="12">
    <location>
        <begin position="63"/>
        <end position="66"/>
    </location>
</feature>
<feature type="strand" evidence="12">
    <location>
        <begin position="70"/>
        <end position="73"/>
    </location>
</feature>
<proteinExistence type="evidence at protein level"/>
<reference key="1">
    <citation type="journal article" date="2012" name="Biochimie">
        <title>Genes encoding hevein-like defense peptides in wheat: distribution, evolution, and role in stress response.</title>
        <authorList>
            <person name="Andreev Y.A."/>
            <person name="Korostyleva T.V."/>
            <person name="Slavokhotova A.A."/>
            <person name="Rogozhin E.A."/>
            <person name="Utkina L.L."/>
            <person name="Vassilevski A.A."/>
            <person name="Grishin E.V."/>
            <person name="Egorov T.A."/>
            <person name="Odintsova T.I."/>
        </authorList>
    </citation>
    <scope>NUCLEOTIDE SEQUENCE [GENOMIC DNA / MRNA]</scope>
    <source>
        <tissue evidence="9">Seedling</tissue>
    </source>
</reference>
<reference evidence="10" key="2">
    <citation type="journal article" date="2009" name="FEBS J.">
        <title>A novel antifungal hevein-type peptide from Triticum kiharae seeds with a unique 10-cysteine motif.</title>
        <authorList>
            <person name="Odintsova T.I."/>
            <person name="Vassilevski A.A."/>
            <person name="Slavokhotova A.A."/>
            <person name="Musolyamov A.K."/>
            <person name="Finkina E.I."/>
            <person name="Khadeeva N.V."/>
            <person name="Rogozhin E.A."/>
            <person name="Korostyleva T.V."/>
            <person name="Pukhalsky V.A."/>
            <person name="Grishin E.V."/>
            <person name="Egorov T.A."/>
        </authorList>
    </citation>
    <scope>PROTEIN SEQUENCE OF 35-79</scope>
    <scope>FUNCTION OF ANTIMICROBIAL PEPTIDE 1A</scope>
    <scope>MASS SPECTROMETRY</scope>
    <source>
        <tissue evidence="4">Seed</tissue>
    </source>
</reference>
<reference evidence="10" key="3">
    <citation type="journal article" date="2005" name="Peptides">
        <title>Diversity of wheat anti-microbial peptides.</title>
        <authorList>
            <person name="Egorov T.A."/>
            <person name="Odintsova T.I."/>
            <person name="Pukhalsky V.A."/>
            <person name="Grishin E.V."/>
        </authorList>
    </citation>
    <scope>PROTEIN SEQUENCE OF 35-67</scope>
    <scope>MASS SPECTROMETRY</scope>
    <source>
        <tissue evidence="3">Seed</tissue>
    </source>
</reference>
<reference key="4">
    <citation type="journal article" date="2014" name="FEBS J.">
        <title>Novel mode of action of plant defense peptides - hevein-like antimicrobial peptides from wheat inhibit fungal metalloproteases.</title>
        <authorList>
            <person name="Slavokhotova A.A."/>
            <person name="Naumann T.A."/>
            <person name="Price N.P."/>
            <person name="Rogozhin E.A."/>
            <person name="Andreev Y.A."/>
            <person name="Vassilevski A.A."/>
            <person name="Odintsova T.I."/>
        </authorList>
    </citation>
    <scope>FUNCTION OF ANTIMICROBIAL PEPTIDE 1B</scope>
</reference>
<reference key="5">
    <citation type="journal article" date="2011" name="Biochem. Biophys. Res. Commun.">
        <title>Solution structure of a defense peptide from wheat with a 10-cysteine motif.</title>
        <authorList>
            <person name="Dubovskii P.V."/>
            <person name="Vassilevski A.A."/>
            <person name="Slavokhotova A.A."/>
            <person name="Odintsova T.I."/>
            <person name="Grishin E.V."/>
            <person name="Egorov T.A."/>
            <person name="Arseniev A.S."/>
        </authorList>
    </citation>
    <scope>STRUCTURE BY NMR OF 35-78</scope>
    <scope>DISULFIDE BONDS</scope>
</reference>
<comment type="function">
    <molecule>Antimicrobial peptide 1a</molecule>
    <text evidence="4">Binds chitin. Has antifungal activity against the fungi F.solani (IC(50)=5 ug/ml), F.verticillioides (IC(50)=30 ug/ml), F.oxysporum (IC(50)=5 ug/ml), B.sorokiniana (IC(50)=5 ug/ml), B.cinerea (IC(50)=20 ug/ml) and N.crassa (IC(50)=10 ug/ml). Inhibits hyphal elongation and causes browning of hyphae in F.oxysporum. Causes destruction and discoloration of spores in B.sorokiniana. Inhibits the development of disease caused by the fungus P.infestans on potato tubers. Has antibacterial activity against the Gram-negative bacteria P.syringae and E.carotovora, and the Gram-positive bacterium C.michiganensis.</text>
</comment>
<comment type="function">
    <molecule>Antimicrobial peptide 1b</molecule>
    <text evidence="6">Has antifungal activity against F.verticillioides (IC(50)=2.7 ug/ml). At concentrations between 45 uM and 225 uM, inhibits activity of metalloproteinase fungalysin Fv-cpm from F.verticillioides.</text>
</comment>
<comment type="mass spectrometry">
    <molecule>Antimicrobial peptide 1b</molecule>
    <text>Antimicrobial peptide 1b.</text>
</comment>
<comment type="mass spectrometry">
    <molecule>Antimicrobial peptide 1a</molecule>
    <text>Antimicrobial peptide 1a.</text>
</comment>
<comment type="mass spectrometry">
    <molecule>Antimicrobial peptide 1b</molecule>
    <text>Antimicrobial peptide 1b.</text>
</comment>
<comment type="mass spectrometry">
    <molecule>Antimicrobial peptide 1a</molecule>
    <text>Antimicrobial peptide 1a.</text>
</comment>
<name>AMP_TRIKH</name>
<accession>P85966</accession>
<accession>H6S4F1</accession>
<dbReference type="EMBL" id="HE583764">
    <property type="protein sequence ID" value="CCD30733.1"/>
    <property type="molecule type" value="mRNA"/>
</dbReference>
<dbReference type="EMBL" id="HE583766">
    <property type="protein sequence ID" value="CCD30735.1"/>
    <property type="molecule type" value="Genomic_DNA"/>
</dbReference>
<dbReference type="PDB" id="2LB7">
    <property type="method" value="NMR"/>
    <property type="chains" value="A=35-78"/>
</dbReference>
<dbReference type="PDBsum" id="2LB7"/>
<dbReference type="BMRB" id="P85966"/>
<dbReference type="SMR" id="P85966"/>
<dbReference type="CAZy" id="CBM18">
    <property type="family name" value="Carbohydrate-Binding Module Family 18"/>
</dbReference>
<dbReference type="EvolutionaryTrace" id="P85966"/>
<dbReference type="GO" id="GO:0008061">
    <property type="term" value="F:chitin binding"/>
    <property type="evidence" value="ECO:0007669"/>
    <property type="project" value="UniProtKB-KW"/>
</dbReference>
<dbReference type="GO" id="GO:0042742">
    <property type="term" value="P:defense response to bacterium"/>
    <property type="evidence" value="ECO:0007669"/>
    <property type="project" value="UniProtKB-KW"/>
</dbReference>
<dbReference type="GO" id="GO:0050832">
    <property type="term" value="P:defense response to fungus"/>
    <property type="evidence" value="ECO:0007669"/>
    <property type="project" value="UniProtKB-KW"/>
</dbReference>
<dbReference type="GO" id="GO:0031640">
    <property type="term" value="P:killing of cells of another organism"/>
    <property type="evidence" value="ECO:0007669"/>
    <property type="project" value="UniProtKB-KW"/>
</dbReference>
<dbReference type="CDD" id="cd00035">
    <property type="entry name" value="ChtBD1"/>
    <property type="match status" value="1"/>
</dbReference>
<dbReference type="Gene3D" id="3.30.60.10">
    <property type="entry name" value="Endochitinase-like"/>
    <property type="match status" value="1"/>
</dbReference>
<dbReference type="InterPro" id="IPR001002">
    <property type="entry name" value="Chitin-bd_1"/>
</dbReference>
<dbReference type="InterPro" id="IPR036861">
    <property type="entry name" value="Endochitinase-like_sf"/>
</dbReference>
<dbReference type="Pfam" id="PF00187">
    <property type="entry name" value="Chitin_bind_1"/>
    <property type="match status" value="1"/>
</dbReference>
<dbReference type="PRINTS" id="PR00451">
    <property type="entry name" value="CHITINBINDNG"/>
</dbReference>
<dbReference type="SMART" id="SM00270">
    <property type="entry name" value="ChtBD1"/>
    <property type="match status" value="1"/>
</dbReference>
<dbReference type="SUPFAM" id="SSF57016">
    <property type="entry name" value="Plant lectins/antimicrobial peptides"/>
    <property type="match status" value="1"/>
</dbReference>
<dbReference type="PROSITE" id="PS50941">
    <property type="entry name" value="CHIT_BIND_I_2"/>
    <property type="match status" value="1"/>
</dbReference>
<keyword id="KW-0002">3D-structure</keyword>
<keyword id="KW-0044">Antibiotic</keyword>
<keyword id="KW-0929">Antimicrobial</keyword>
<keyword id="KW-0147">Chitin-binding</keyword>
<keyword id="KW-0903">Direct protein sequencing</keyword>
<keyword id="KW-1015">Disulfide bond</keyword>
<keyword id="KW-0295">Fungicide</keyword>
<keyword id="KW-0611">Plant defense</keyword>
<keyword id="KW-0732">Signal</keyword>